<comment type="subcellular location">
    <subcellularLocation>
        <location evidence="2">Membrane</location>
        <topology evidence="2">Single-pass membrane protein</topology>
    </subcellularLocation>
</comment>
<keyword id="KW-0472">Membrane</keyword>
<keyword id="KW-1185">Reference proteome</keyword>
<keyword id="KW-0812">Transmembrane</keyword>
<keyword id="KW-1133">Transmembrane helix</keyword>
<reference key="1">
    <citation type="journal article" date="1997" name="Nature">
        <title>The nucleotide sequence of Saccharomyces cerevisiae chromosome XIII.</title>
        <authorList>
            <person name="Bowman S."/>
            <person name="Churcher C.M."/>
            <person name="Badcock K."/>
            <person name="Brown D."/>
            <person name="Chillingworth T."/>
            <person name="Connor R."/>
            <person name="Dedman K."/>
            <person name="Devlin K."/>
            <person name="Gentles S."/>
            <person name="Hamlin N."/>
            <person name="Hunt S."/>
            <person name="Jagels K."/>
            <person name="Lye G."/>
            <person name="Moule S."/>
            <person name="Odell C."/>
            <person name="Pearson D."/>
            <person name="Rajandream M.A."/>
            <person name="Rice P."/>
            <person name="Skelton J."/>
            <person name="Walsh S.V."/>
            <person name="Whitehead S."/>
            <person name="Barrell B.G."/>
        </authorList>
    </citation>
    <scope>NUCLEOTIDE SEQUENCE [LARGE SCALE GENOMIC DNA]</scope>
    <source>
        <strain>ATCC 204508 / S288c</strain>
    </source>
</reference>
<reference key="2">
    <citation type="journal article" date="2014" name="G3 (Bethesda)">
        <title>The reference genome sequence of Saccharomyces cerevisiae: Then and now.</title>
        <authorList>
            <person name="Engel S.R."/>
            <person name="Dietrich F.S."/>
            <person name="Fisk D.G."/>
            <person name="Binkley G."/>
            <person name="Balakrishnan R."/>
            <person name="Costanzo M.C."/>
            <person name="Dwight S.S."/>
            <person name="Hitz B.C."/>
            <person name="Karra K."/>
            <person name="Nash R.S."/>
            <person name="Weng S."/>
            <person name="Wong E.D."/>
            <person name="Lloyd P."/>
            <person name="Skrzypek M.S."/>
            <person name="Miyasato S.R."/>
            <person name="Simison M."/>
            <person name="Cherry J.M."/>
        </authorList>
    </citation>
    <scope>GENOME REANNOTATION</scope>
    <source>
        <strain>ATCC 204508 / S288c</strain>
    </source>
</reference>
<reference key="3">
    <citation type="journal article" date="2002" name="Nat. Biotechnol.">
        <title>An integrated approach for finding overlooked genes in yeast.</title>
        <authorList>
            <person name="Kumar A."/>
            <person name="Harrison P.M."/>
            <person name="Cheung K.-H."/>
            <person name="Lan N."/>
            <person name="Echols N."/>
            <person name="Bertone P."/>
            <person name="Miller P."/>
            <person name="Gerstein M.B."/>
            <person name="Snyder M."/>
        </authorList>
    </citation>
    <scope>NUCLEOTIDE SEQUENCE [GENOMIC DNA]</scope>
</reference>
<name>YM182_YEAST</name>
<dbReference type="EMBL" id="Z49808">
    <property type="status" value="NOT_ANNOTATED_CDS"/>
    <property type="molecule type" value="Genomic_DNA"/>
</dbReference>
<dbReference type="EMBL" id="AF479908">
    <property type="protein sequence ID" value="AAL79221.1"/>
    <property type="molecule type" value="Genomic_DNA"/>
</dbReference>
<dbReference type="EMBL" id="BK006946">
    <property type="protein sequence ID" value="DAA10080.1"/>
    <property type="molecule type" value="Genomic_DNA"/>
</dbReference>
<dbReference type="BioGRID" id="37044">
    <property type="interactions" value="124"/>
</dbReference>
<dbReference type="STRING" id="4932.YMR182W-A"/>
<dbReference type="PaxDb" id="4932-YMR182W-A"/>
<dbReference type="EnsemblFungi" id="YMR182W-A_mRNA">
    <property type="protein sequence ID" value="YMR182W-A"/>
    <property type="gene ID" value="YMR182W-A"/>
</dbReference>
<dbReference type="KEGG" id="sce:YMR182W-A"/>
<dbReference type="AGR" id="SGD:S000028693"/>
<dbReference type="SGD" id="S000028693">
    <property type="gene designation" value="YMR182W-A"/>
</dbReference>
<dbReference type="VEuPathDB" id="FungiDB:YMR182W-A"/>
<dbReference type="HOGENOM" id="CLU_3413182_0_0_1"/>
<dbReference type="InParanoid" id="Q8TGS7"/>
<dbReference type="BioCyc" id="YEAST:G3O-33032-MONOMER"/>
<dbReference type="BioGRID-ORCS" id="1466502">
    <property type="hits" value="0 hits in 10 CRISPR screens"/>
</dbReference>
<dbReference type="PRO" id="PR:Q8TGS7"/>
<dbReference type="Proteomes" id="UP000002311">
    <property type="component" value="Chromosome XIII"/>
</dbReference>
<dbReference type="GO" id="GO:0016020">
    <property type="term" value="C:membrane"/>
    <property type="evidence" value="ECO:0007669"/>
    <property type="project" value="UniProtKB-SubCell"/>
</dbReference>
<proteinExistence type="predicted"/>
<accession>Q8TGS7</accession>
<accession>D6W006</accession>
<protein>
    <recommendedName>
        <fullName>Uncharacterized protein YMR182W-A</fullName>
    </recommendedName>
</protein>
<feature type="chain" id="PRO_0000247789" description="Uncharacterized protein YMR182W-A">
    <location>
        <begin position="1"/>
        <end position="28"/>
    </location>
</feature>
<feature type="transmembrane region" description="Helical" evidence="1">
    <location>
        <begin position="5"/>
        <end position="27"/>
    </location>
</feature>
<organism>
    <name type="scientific">Saccharomyces cerevisiae (strain ATCC 204508 / S288c)</name>
    <name type="common">Baker's yeast</name>
    <dbReference type="NCBI Taxonomy" id="559292"/>
    <lineage>
        <taxon>Eukaryota</taxon>
        <taxon>Fungi</taxon>
        <taxon>Dikarya</taxon>
        <taxon>Ascomycota</taxon>
        <taxon>Saccharomycotina</taxon>
        <taxon>Saccharomycetes</taxon>
        <taxon>Saccharomycetales</taxon>
        <taxon>Saccharomycetaceae</taxon>
        <taxon>Saccharomyces</taxon>
    </lineage>
</organism>
<sequence length="28" mass="3091">MRKPSAFHACNIIFLPLVKCASATIMLN</sequence>
<evidence type="ECO:0000255" key="1"/>
<evidence type="ECO:0000305" key="2"/>
<gene>
    <name type="ordered locus">YMR182W-A</name>
</gene>